<gene>
    <name evidence="1" type="primary">def</name>
    <name type="ordered locus">ECUMN_3760</name>
</gene>
<accession>B7NDQ8</accession>
<sequence length="169" mass="19328">MSVLQVLHIPDERLRKVAKPVEEVNAEIQRIVDDMFETMYAEEGIGLAATQVDIHQRIIVIDVSENRDERLVLINPELLEKSGETGIEEGCLSIPEQRALVPRAEKVKIRALDRDGKPFELEADGLLAICIQHEMDHLVGKLFMDYLSPLKQQRIRQKVEKLDRLKARA</sequence>
<protein>
    <recommendedName>
        <fullName evidence="1">Peptide deformylase</fullName>
        <shortName evidence="1">PDF</shortName>
        <ecNumber evidence="1">3.5.1.88</ecNumber>
    </recommendedName>
    <alternativeName>
        <fullName evidence="1">Polypeptide deformylase</fullName>
    </alternativeName>
</protein>
<name>DEF_ECOLU</name>
<organism>
    <name type="scientific">Escherichia coli O17:K52:H18 (strain UMN026 / ExPEC)</name>
    <dbReference type="NCBI Taxonomy" id="585056"/>
    <lineage>
        <taxon>Bacteria</taxon>
        <taxon>Pseudomonadati</taxon>
        <taxon>Pseudomonadota</taxon>
        <taxon>Gammaproteobacteria</taxon>
        <taxon>Enterobacterales</taxon>
        <taxon>Enterobacteriaceae</taxon>
        <taxon>Escherichia</taxon>
    </lineage>
</organism>
<reference key="1">
    <citation type="journal article" date="2009" name="PLoS Genet.">
        <title>Organised genome dynamics in the Escherichia coli species results in highly diverse adaptive paths.</title>
        <authorList>
            <person name="Touchon M."/>
            <person name="Hoede C."/>
            <person name="Tenaillon O."/>
            <person name="Barbe V."/>
            <person name="Baeriswyl S."/>
            <person name="Bidet P."/>
            <person name="Bingen E."/>
            <person name="Bonacorsi S."/>
            <person name="Bouchier C."/>
            <person name="Bouvet O."/>
            <person name="Calteau A."/>
            <person name="Chiapello H."/>
            <person name="Clermont O."/>
            <person name="Cruveiller S."/>
            <person name="Danchin A."/>
            <person name="Diard M."/>
            <person name="Dossat C."/>
            <person name="Karoui M.E."/>
            <person name="Frapy E."/>
            <person name="Garry L."/>
            <person name="Ghigo J.M."/>
            <person name="Gilles A.M."/>
            <person name="Johnson J."/>
            <person name="Le Bouguenec C."/>
            <person name="Lescat M."/>
            <person name="Mangenot S."/>
            <person name="Martinez-Jehanne V."/>
            <person name="Matic I."/>
            <person name="Nassif X."/>
            <person name="Oztas S."/>
            <person name="Petit M.A."/>
            <person name="Pichon C."/>
            <person name="Rouy Z."/>
            <person name="Ruf C.S."/>
            <person name="Schneider D."/>
            <person name="Tourret J."/>
            <person name="Vacherie B."/>
            <person name="Vallenet D."/>
            <person name="Medigue C."/>
            <person name="Rocha E.P.C."/>
            <person name="Denamur E."/>
        </authorList>
    </citation>
    <scope>NUCLEOTIDE SEQUENCE [LARGE SCALE GENOMIC DNA]</scope>
    <source>
        <strain>UMN026 / ExPEC</strain>
    </source>
</reference>
<dbReference type="EC" id="3.5.1.88" evidence="1"/>
<dbReference type="EMBL" id="CU928163">
    <property type="protein sequence ID" value="CAR14908.1"/>
    <property type="molecule type" value="Genomic_DNA"/>
</dbReference>
<dbReference type="RefSeq" id="WP_000114984.1">
    <property type="nucleotide sequence ID" value="NC_011751.1"/>
</dbReference>
<dbReference type="RefSeq" id="YP_002414413.1">
    <property type="nucleotide sequence ID" value="NC_011751.1"/>
</dbReference>
<dbReference type="SMR" id="B7NDQ8"/>
<dbReference type="STRING" id="585056.ECUMN_3760"/>
<dbReference type="GeneID" id="89518132"/>
<dbReference type="KEGG" id="eum:ECUMN_3760"/>
<dbReference type="PATRIC" id="fig|585056.7.peg.3935"/>
<dbReference type="HOGENOM" id="CLU_061901_2_1_6"/>
<dbReference type="Proteomes" id="UP000007097">
    <property type="component" value="Chromosome"/>
</dbReference>
<dbReference type="GO" id="GO:0046872">
    <property type="term" value="F:metal ion binding"/>
    <property type="evidence" value="ECO:0007669"/>
    <property type="project" value="UniProtKB-KW"/>
</dbReference>
<dbReference type="GO" id="GO:0042586">
    <property type="term" value="F:peptide deformylase activity"/>
    <property type="evidence" value="ECO:0007669"/>
    <property type="project" value="UniProtKB-UniRule"/>
</dbReference>
<dbReference type="GO" id="GO:0043686">
    <property type="term" value="P:co-translational protein modification"/>
    <property type="evidence" value="ECO:0007669"/>
    <property type="project" value="TreeGrafter"/>
</dbReference>
<dbReference type="GO" id="GO:0006412">
    <property type="term" value="P:translation"/>
    <property type="evidence" value="ECO:0007669"/>
    <property type="project" value="UniProtKB-UniRule"/>
</dbReference>
<dbReference type="CDD" id="cd00487">
    <property type="entry name" value="Pep_deformylase"/>
    <property type="match status" value="1"/>
</dbReference>
<dbReference type="FunFam" id="3.90.45.10:FF:000001">
    <property type="entry name" value="Peptide deformylase"/>
    <property type="match status" value="1"/>
</dbReference>
<dbReference type="Gene3D" id="3.90.45.10">
    <property type="entry name" value="Peptide deformylase"/>
    <property type="match status" value="1"/>
</dbReference>
<dbReference type="HAMAP" id="MF_00163">
    <property type="entry name" value="Pep_deformylase"/>
    <property type="match status" value="1"/>
</dbReference>
<dbReference type="InterPro" id="IPR023635">
    <property type="entry name" value="Peptide_deformylase"/>
</dbReference>
<dbReference type="InterPro" id="IPR036821">
    <property type="entry name" value="Peptide_deformylase_sf"/>
</dbReference>
<dbReference type="NCBIfam" id="TIGR00079">
    <property type="entry name" value="pept_deformyl"/>
    <property type="match status" value="1"/>
</dbReference>
<dbReference type="NCBIfam" id="NF001159">
    <property type="entry name" value="PRK00150.1-3"/>
    <property type="match status" value="1"/>
</dbReference>
<dbReference type="PANTHER" id="PTHR10458">
    <property type="entry name" value="PEPTIDE DEFORMYLASE"/>
    <property type="match status" value="1"/>
</dbReference>
<dbReference type="PANTHER" id="PTHR10458:SF21">
    <property type="entry name" value="PEPTIDE DEFORMYLASE"/>
    <property type="match status" value="1"/>
</dbReference>
<dbReference type="Pfam" id="PF01327">
    <property type="entry name" value="Pep_deformylase"/>
    <property type="match status" value="1"/>
</dbReference>
<dbReference type="PIRSF" id="PIRSF004749">
    <property type="entry name" value="Pep_def"/>
    <property type="match status" value="1"/>
</dbReference>
<dbReference type="PRINTS" id="PR01576">
    <property type="entry name" value="PDEFORMYLASE"/>
</dbReference>
<dbReference type="SUPFAM" id="SSF56420">
    <property type="entry name" value="Peptide deformylase"/>
    <property type="match status" value="1"/>
</dbReference>
<evidence type="ECO:0000255" key="1">
    <source>
        <dbReference type="HAMAP-Rule" id="MF_00163"/>
    </source>
</evidence>
<proteinExistence type="inferred from homology"/>
<comment type="function">
    <text evidence="1">Removes the formyl group from the N-terminal Met of newly synthesized proteins. Requires at least a dipeptide for an efficient rate of reaction. N-terminal L-methionine is a prerequisite for activity but the enzyme has broad specificity at other positions.</text>
</comment>
<comment type="catalytic activity">
    <reaction evidence="1">
        <text>N-terminal N-formyl-L-methionyl-[peptide] + H2O = N-terminal L-methionyl-[peptide] + formate</text>
        <dbReference type="Rhea" id="RHEA:24420"/>
        <dbReference type="Rhea" id="RHEA-COMP:10639"/>
        <dbReference type="Rhea" id="RHEA-COMP:10640"/>
        <dbReference type="ChEBI" id="CHEBI:15377"/>
        <dbReference type="ChEBI" id="CHEBI:15740"/>
        <dbReference type="ChEBI" id="CHEBI:49298"/>
        <dbReference type="ChEBI" id="CHEBI:64731"/>
        <dbReference type="EC" id="3.5.1.88"/>
    </reaction>
</comment>
<comment type="cofactor">
    <cofactor evidence="1">
        <name>Fe(2+)</name>
        <dbReference type="ChEBI" id="CHEBI:29033"/>
    </cofactor>
    <text evidence="1">Binds 1 Fe(2+) ion.</text>
</comment>
<comment type="similarity">
    <text evidence="1">Belongs to the polypeptide deformylase family.</text>
</comment>
<feature type="chain" id="PRO_1000200729" description="Peptide deformylase">
    <location>
        <begin position="1"/>
        <end position="169"/>
    </location>
</feature>
<feature type="active site" evidence="1">
    <location>
        <position position="134"/>
    </location>
</feature>
<feature type="binding site" evidence="1">
    <location>
        <position position="91"/>
    </location>
    <ligand>
        <name>Fe cation</name>
        <dbReference type="ChEBI" id="CHEBI:24875"/>
    </ligand>
</feature>
<feature type="binding site" evidence="1">
    <location>
        <position position="133"/>
    </location>
    <ligand>
        <name>Fe cation</name>
        <dbReference type="ChEBI" id="CHEBI:24875"/>
    </ligand>
</feature>
<feature type="binding site" evidence="1">
    <location>
        <position position="137"/>
    </location>
    <ligand>
        <name>Fe cation</name>
        <dbReference type="ChEBI" id="CHEBI:24875"/>
    </ligand>
</feature>
<keyword id="KW-0378">Hydrolase</keyword>
<keyword id="KW-0408">Iron</keyword>
<keyword id="KW-0479">Metal-binding</keyword>
<keyword id="KW-0648">Protein biosynthesis</keyword>